<gene>
    <name evidence="1" type="primary">truB</name>
    <name type="ordered locus">Sputw3181_1072</name>
</gene>
<sequence length="318" mass="35054">MARRPKGRFIDGIVLLDKSTGMSSNFALQRVKRFFNANKAGHTGALDPLATGMLPVCLGEATKFSQHLLDADKRYLVTAKLGERTDTSDSDGEVVQTRPVTFTEAQLLSALEHFRGDTQQVPSMYSALKYQGQPLYKYAREGIEVPRESRPITVFELNFISLEGDELTLDIHCSKGTYIRTIIDDLGEMLGCGAHVIMLRRTQVAQYPYAKMVTLEQLEALVTQAHEQQIDPSVLLDPLLLPMDTAVADFPEVNVPEASAAYLMQGQAVRVTGLKADTLVRITLGDAHRFVGIGAMNDDGLLAPKRLIVIHDEPIVTD</sequence>
<comment type="function">
    <text evidence="1">Responsible for synthesis of pseudouridine from uracil-55 in the psi GC loop of transfer RNAs.</text>
</comment>
<comment type="catalytic activity">
    <reaction evidence="1">
        <text>uridine(55) in tRNA = pseudouridine(55) in tRNA</text>
        <dbReference type="Rhea" id="RHEA:42532"/>
        <dbReference type="Rhea" id="RHEA-COMP:10101"/>
        <dbReference type="Rhea" id="RHEA-COMP:10102"/>
        <dbReference type="ChEBI" id="CHEBI:65314"/>
        <dbReference type="ChEBI" id="CHEBI:65315"/>
        <dbReference type="EC" id="5.4.99.25"/>
    </reaction>
</comment>
<comment type="similarity">
    <text evidence="1">Belongs to the pseudouridine synthase TruB family. Type 1 subfamily.</text>
</comment>
<keyword id="KW-0413">Isomerase</keyword>
<keyword id="KW-0819">tRNA processing</keyword>
<dbReference type="EC" id="5.4.99.25" evidence="1"/>
<dbReference type="EMBL" id="CP000503">
    <property type="protein sequence ID" value="ABM23922.1"/>
    <property type="molecule type" value="Genomic_DNA"/>
</dbReference>
<dbReference type="RefSeq" id="WP_011788445.1">
    <property type="nucleotide sequence ID" value="NC_008750.1"/>
</dbReference>
<dbReference type="SMR" id="A1RGX7"/>
<dbReference type="KEGG" id="shw:Sputw3181_1072"/>
<dbReference type="HOGENOM" id="CLU_032087_0_3_6"/>
<dbReference type="Proteomes" id="UP000002597">
    <property type="component" value="Chromosome"/>
</dbReference>
<dbReference type="GO" id="GO:0003723">
    <property type="term" value="F:RNA binding"/>
    <property type="evidence" value="ECO:0007669"/>
    <property type="project" value="InterPro"/>
</dbReference>
<dbReference type="GO" id="GO:0160148">
    <property type="term" value="F:tRNA pseudouridine(55) synthase activity"/>
    <property type="evidence" value="ECO:0007669"/>
    <property type="project" value="UniProtKB-EC"/>
</dbReference>
<dbReference type="GO" id="GO:1990481">
    <property type="term" value="P:mRNA pseudouridine synthesis"/>
    <property type="evidence" value="ECO:0007669"/>
    <property type="project" value="TreeGrafter"/>
</dbReference>
<dbReference type="GO" id="GO:0031119">
    <property type="term" value="P:tRNA pseudouridine synthesis"/>
    <property type="evidence" value="ECO:0007669"/>
    <property type="project" value="UniProtKB-UniRule"/>
</dbReference>
<dbReference type="CDD" id="cd02573">
    <property type="entry name" value="PseudoU_synth_EcTruB"/>
    <property type="match status" value="1"/>
</dbReference>
<dbReference type="CDD" id="cd21152">
    <property type="entry name" value="PUA_TruB_bacterial"/>
    <property type="match status" value="1"/>
</dbReference>
<dbReference type="FunFam" id="2.30.130.10:FF:000004">
    <property type="entry name" value="tRNA pseudouridine synthase B"/>
    <property type="match status" value="1"/>
</dbReference>
<dbReference type="FunFam" id="3.30.2350.10:FF:000003">
    <property type="entry name" value="tRNA pseudouridine synthase B"/>
    <property type="match status" value="1"/>
</dbReference>
<dbReference type="Gene3D" id="3.30.2350.10">
    <property type="entry name" value="Pseudouridine synthase"/>
    <property type="match status" value="1"/>
</dbReference>
<dbReference type="Gene3D" id="2.30.130.10">
    <property type="entry name" value="PUA domain"/>
    <property type="match status" value="1"/>
</dbReference>
<dbReference type="HAMAP" id="MF_01080">
    <property type="entry name" value="TruB_bact"/>
    <property type="match status" value="1"/>
</dbReference>
<dbReference type="InterPro" id="IPR020103">
    <property type="entry name" value="PsdUridine_synth_cat_dom_sf"/>
</dbReference>
<dbReference type="InterPro" id="IPR002501">
    <property type="entry name" value="PsdUridine_synth_N"/>
</dbReference>
<dbReference type="InterPro" id="IPR015947">
    <property type="entry name" value="PUA-like_sf"/>
</dbReference>
<dbReference type="InterPro" id="IPR036974">
    <property type="entry name" value="PUA_sf"/>
</dbReference>
<dbReference type="InterPro" id="IPR014780">
    <property type="entry name" value="tRNA_psdUridine_synth_TruB"/>
</dbReference>
<dbReference type="InterPro" id="IPR015240">
    <property type="entry name" value="tRNA_sdUridine_synth_fam1_C"/>
</dbReference>
<dbReference type="InterPro" id="IPR032819">
    <property type="entry name" value="TruB_C"/>
</dbReference>
<dbReference type="NCBIfam" id="TIGR00431">
    <property type="entry name" value="TruB"/>
    <property type="match status" value="1"/>
</dbReference>
<dbReference type="PANTHER" id="PTHR13767:SF2">
    <property type="entry name" value="PSEUDOURIDYLATE SYNTHASE TRUB1"/>
    <property type="match status" value="1"/>
</dbReference>
<dbReference type="PANTHER" id="PTHR13767">
    <property type="entry name" value="TRNA-PSEUDOURIDINE SYNTHASE"/>
    <property type="match status" value="1"/>
</dbReference>
<dbReference type="Pfam" id="PF09157">
    <property type="entry name" value="TruB-C_2"/>
    <property type="match status" value="1"/>
</dbReference>
<dbReference type="Pfam" id="PF16198">
    <property type="entry name" value="TruB_C_2"/>
    <property type="match status" value="1"/>
</dbReference>
<dbReference type="Pfam" id="PF01509">
    <property type="entry name" value="TruB_N"/>
    <property type="match status" value="1"/>
</dbReference>
<dbReference type="SUPFAM" id="SSF55120">
    <property type="entry name" value="Pseudouridine synthase"/>
    <property type="match status" value="1"/>
</dbReference>
<dbReference type="SUPFAM" id="SSF88697">
    <property type="entry name" value="PUA domain-like"/>
    <property type="match status" value="1"/>
</dbReference>
<proteinExistence type="inferred from homology"/>
<accession>A1RGX7</accession>
<organism>
    <name type="scientific">Shewanella sp. (strain W3-18-1)</name>
    <dbReference type="NCBI Taxonomy" id="351745"/>
    <lineage>
        <taxon>Bacteria</taxon>
        <taxon>Pseudomonadati</taxon>
        <taxon>Pseudomonadota</taxon>
        <taxon>Gammaproteobacteria</taxon>
        <taxon>Alteromonadales</taxon>
        <taxon>Shewanellaceae</taxon>
        <taxon>Shewanella</taxon>
    </lineage>
</organism>
<name>TRUB_SHESW</name>
<reference key="1">
    <citation type="submission" date="2006-12" db="EMBL/GenBank/DDBJ databases">
        <title>Complete sequence of Shewanella sp. W3-18-1.</title>
        <authorList>
            <consortium name="US DOE Joint Genome Institute"/>
            <person name="Copeland A."/>
            <person name="Lucas S."/>
            <person name="Lapidus A."/>
            <person name="Barry K."/>
            <person name="Detter J.C."/>
            <person name="Glavina del Rio T."/>
            <person name="Hammon N."/>
            <person name="Israni S."/>
            <person name="Dalin E."/>
            <person name="Tice H."/>
            <person name="Pitluck S."/>
            <person name="Chain P."/>
            <person name="Malfatti S."/>
            <person name="Shin M."/>
            <person name="Vergez L."/>
            <person name="Schmutz J."/>
            <person name="Larimer F."/>
            <person name="Land M."/>
            <person name="Hauser L."/>
            <person name="Kyrpides N."/>
            <person name="Lykidis A."/>
            <person name="Tiedje J."/>
            <person name="Richardson P."/>
        </authorList>
    </citation>
    <scope>NUCLEOTIDE SEQUENCE [LARGE SCALE GENOMIC DNA]</scope>
    <source>
        <strain>W3-18-1</strain>
    </source>
</reference>
<protein>
    <recommendedName>
        <fullName evidence="1">tRNA pseudouridine synthase B</fullName>
        <ecNumber evidence="1">5.4.99.25</ecNumber>
    </recommendedName>
    <alternativeName>
        <fullName evidence="1">tRNA pseudouridine(55) synthase</fullName>
        <shortName evidence="1">Psi55 synthase</shortName>
    </alternativeName>
    <alternativeName>
        <fullName evidence="1">tRNA pseudouridylate synthase</fullName>
    </alternativeName>
    <alternativeName>
        <fullName evidence="1">tRNA-uridine isomerase</fullName>
    </alternativeName>
</protein>
<feature type="chain" id="PRO_1000084682" description="tRNA pseudouridine synthase B">
    <location>
        <begin position="1"/>
        <end position="318"/>
    </location>
</feature>
<feature type="active site" description="Nucleophile" evidence="1">
    <location>
        <position position="47"/>
    </location>
</feature>
<evidence type="ECO:0000255" key="1">
    <source>
        <dbReference type="HAMAP-Rule" id="MF_01080"/>
    </source>
</evidence>